<comment type="function">
    <text evidence="1">Involved in maceration and soft-rotting of plant tissue. Hydrolyzes the 1,4-alpha glycosidic bonds of de-esterified pectate in the smooth region of the plant cell wall (By similarity).</text>
</comment>
<comment type="catalytic activity">
    <reaction>
        <text>(1,4-alpha-D-galacturonosyl)n+m + H2O = (1,4-alpha-D-galacturonosyl)n + (1,4-alpha-D-galacturonosyl)m.</text>
        <dbReference type="EC" id="3.2.1.15"/>
    </reaction>
</comment>
<comment type="subcellular location">
    <subcellularLocation>
        <location evidence="4">Secreted</location>
    </subcellularLocation>
</comment>
<comment type="similarity">
    <text evidence="4">Belongs to the glycosyl hydrolase 28 family.</text>
</comment>
<keyword id="KW-0961">Cell wall biogenesis/degradation</keyword>
<keyword id="KW-1015">Disulfide bond</keyword>
<keyword id="KW-0325">Glycoprotein</keyword>
<keyword id="KW-0326">Glycosidase</keyword>
<keyword id="KW-0378">Hydrolase</keyword>
<keyword id="KW-0677">Repeat</keyword>
<keyword id="KW-0964">Secreted</keyword>
<keyword id="KW-0732">Signal</keyword>
<keyword id="KW-0865">Zymogen</keyword>
<proteinExistence type="evidence at transcript level"/>
<sequence length="363" mass="37506">MQLLQSSVIAATVGAALVAAAPVELEARDSCTFTSAADAKSGKTSCSTITLSNIEVPAGETLDLTGLNDGTTVIFSGETTFGYKEWEGPLISVSGTNIKVQQASGAKIDGDGSRWWDGEGGNGGKTKPKFFYAHKLDSSSITGLQIYNTPVQGFSIQSDNLNITDVTIDNSAGTAEGHNTDAFDIGSSTYINIDGATVYNQDDCLAINSGSHITFTNGYCDGGHGLSIGSVGGRSDNTVEDVTISNSKVVNSQNGVRIKTVYGATGTVSNVKFEDITLSGITKYGLVVEQDYENGSPTGTPTNGITVSGITFEKVTGTVESDATDIYILCGSGSCTDWTWSGVSITGGKTSSKCENVPTGASC</sequence>
<accession>P49575</accession>
<organism>
    <name type="scientific">Aspergillus parasiticus</name>
    <dbReference type="NCBI Taxonomy" id="5067"/>
    <lineage>
        <taxon>Eukaryota</taxon>
        <taxon>Fungi</taxon>
        <taxon>Dikarya</taxon>
        <taxon>Ascomycota</taxon>
        <taxon>Pezizomycotina</taxon>
        <taxon>Eurotiomycetes</taxon>
        <taxon>Eurotiomycetidae</taxon>
        <taxon>Eurotiales</taxon>
        <taxon>Aspergillaceae</taxon>
        <taxon>Aspergillus</taxon>
        <taxon>Aspergillus subgen. Circumdati</taxon>
    </lineage>
</organism>
<feature type="signal peptide" evidence="2">
    <location>
        <begin position="1"/>
        <end position="20"/>
    </location>
</feature>
<feature type="propeptide" id="PRO_0000024776" evidence="2">
    <location>
        <begin position="21"/>
        <end position="28"/>
    </location>
</feature>
<feature type="chain" id="PRO_0000024777" description="Probable endopolygalacturonase A">
    <location>
        <begin position="29"/>
        <end position="363"/>
    </location>
</feature>
<feature type="repeat" description="PbH1 1">
    <location>
        <begin position="158"/>
        <end position="187"/>
    </location>
</feature>
<feature type="repeat" description="PbH1 2">
    <location>
        <begin position="188"/>
        <end position="209"/>
    </location>
</feature>
<feature type="repeat" description="PbH1 3">
    <location>
        <begin position="210"/>
        <end position="230"/>
    </location>
</feature>
<feature type="repeat" description="PbH1 4">
    <location>
        <begin position="239"/>
        <end position="260"/>
    </location>
</feature>
<feature type="repeat" description="PbH1 5">
    <location>
        <begin position="268"/>
        <end position="290"/>
    </location>
</feature>
<feature type="repeat" description="PbH1 6">
    <location>
        <begin position="302"/>
        <end position="347"/>
    </location>
</feature>
<feature type="active site" description="Proton donor" evidence="3">
    <location>
        <position position="202"/>
    </location>
</feature>
<feature type="active site" evidence="3">
    <location>
        <position position="224"/>
    </location>
</feature>
<feature type="glycosylation site" description="N-linked (GlcNAc...) asparagine" evidence="2">
    <location>
        <position position="162"/>
    </location>
</feature>
<feature type="disulfide bond" evidence="1">
    <location>
        <begin position="31"/>
        <end position="46"/>
    </location>
</feature>
<feature type="disulfide bond" evidence="1">
    <location>
        <begin position="204"/>
        <end position="220"/>
    </location>
</feature>
<feature type="disulfide bond" evidence="1">
    <location>
        <begin position="330"/>
        <end position="335"/>
    </location>
</feature>
<feature type="disulfide bond" evidence="1">
    <location>
        <begin position="354"/>
        <end position="363"/>
    </location>
</feature>
<evidence type="ECO:0000250" key="1"/>
<evidence type="ECO:0000255" key="2"/>
<evidence type="ECO:0000255" key="3">
    <source>
        <dbReference type="PROSITE-ProRule" id="PRU10052"/>
    </source>
</evidence>
<evidence type="ECO:0000305" key="4"/>
<reference key="1">
    <citation type="journal article" date="1995" name="Gene">
        <title>Cloning and characterization of a novel polygalacturonase-encoding gene from Aspergillus parasiticus.</title>
        <authorList>
            <person name="Cary J.W."/>
            <person name="Brown R."/>
            <person name="Cleveland T.E."/>
            <person name="Whitehead M."/>
            <person name="Dean R.A."/>
        </authorList>
    </citation>
    <scope>NUCLEOTIDE SEQUENCE [MRNA]</scope>
    <source>
        <strain>ATCC 56775 / NRRL 5862 / Su-1 / SRRC 143</strain>
    </source>
</reference>
<name>PGLRA_ASPPA</name>
<dbReference type="EC" id="3.2.1.15"/>
<dbReference type="EMBL" id="U17167">
    <property type="protein sequence ID" value="AAA62349.1"/>
    <property type="molecule type" value="Genomic_DNA"/>
</dbReference>
<dbReference type="EMBL" id="L23523">
    <property type="protein sequence ID" value="AAC37426.1"/>
    <property type="molecule type" value="mRNA"/>
</dbReference>
<dbReference type="PIR" id="JC4049">
    <property type="entry name" value="JC4049"/>
</dbReference>
<dbReference type="SMR" id="P49575"/>
<dbReference type="CAZy" id="GH28">
    <property type="family name" value="Glycoside Hydrolase Family 28"/>
</dbReference>
<dbReference type="GlyCosmos" id="P49575">
    <property type="glycosylation" value="1 site, No reported glycans"/>
</dbReference>
<dbReference type="VEuPathDB" id="FungiDB:BDV34DRAFT_211197"/>
<dbReference type="GO" id="GO:0005576">
    <property type="term" value="C:extracellular region"/>
    <property type="evidence" value="ECO:0007669"/>
    <property type="project" value="UniProtKB-SubCell"/>
</dbReference>
<dbReference type="GO" id="GO:0004650">
    <property type="term" value="F:polygalacturonase activity"/>
    <property type="evidence" value="ECO:0007669"/>
    <property type="project" value="UniProtKB-EC"/>
</dbReference>
<dbReference type="GO" id="GO:0071555">
    <property type="term" value="P:cell wall organization"/>
    <property type="evidence" value="ECO:0007669"/>
    <property type="project" value="UniProtKB-KW"/>
</dbReference>
<dbReference type="GO" id="GO:0045490">
    <property type="term" value="P:pectin catabolic process"/>
    <property type="evidence" value="ECO:0007669"/>
    <property type="project" value="UniProtKB-ARBA"/>
</dbReference>
<dbReference type="FunFam" id="2.160.20.10:FF:000002">
    <property type="entry name" value="Endopolygalacturonase D"/>
    <property type="match status" value="1"/>
</dbReference>
<dbReference type="Gene3D" id="2.160.20.10">
    <property type="entry name" value="Single-stranded right-handed beta-helix, Pectin lyase-like"/>
    <property type="match status" value="1"/>
</dbReference>
<dbReference type="InterPro" id="IPR000743">
    <property type="entry name" value="Glyco_hydro_28"/>
</dbReference>
<dbReference type="InterPro" id="IPR050434">
    <property type="entry name" value="Glycosyl_hydrlase_28"/>
</dbReference>
<dbReference type="InterPro" id="IPR006626">
    <property type="entry name" value="PbH1"/>
</dbReference>
<dbReference type="InterPro" id="IPR012334">
    <property type="entry name" value="Pectin_lyas_fold"/>
</dbReference>
<dbReference type="InterPro" id="IPR011050">
    <property type="entry name" value="Pectin_lyase_fold/virulence"/>
</dbReference>
<dbReference type="PANTHER" id="PTHR31884:SF13">
    <property type="entry name" value="ENDOPOLYGALACTURONASE B"/>
    <property type="match status" value="1"/>
</dbReference>
<dbReference type="PANTHER" id="PTHR31884">
    <property type="entry name" value="POLYGALACTURONASE"/>
    <property type="match status" value="1"/>
</dbReference>
<dbReference type="Pfam" id="PF00295">
    <property type="entry name" value="Glyco_hydro_28"/>
    <property type="match status" value="1"/>
</dbReference>
<dbReference type="SMART" id="SM00710">
    <property type="entry name" value="PbH1"/>
    <property type="match status" value="6"/>
</dbReference>
<dbReference type="SUPFAM" id="SSF51126">
    <property type="entry name" value="Pectin lyase-like"/>
    <property type="match status" value="1"/>
</dbReference>
<dbReference type="PROSITE" id="PS00502">
    <property type="entry name" value="POLYGALACTURONASE"/>
    <property type="match status" value="1"/>
</dbReference>
<protein>
    <recommendedName>
        <fullName>Probable endopolygalacturonase A</fullName>
        <ecNumber>3.2.1.15</ecNumber>
    </recommendedName>
    <alternativeName>
        <fullName>Pectinase A</fullName>
    </alternativeName>
    <alternativeName>
        <fullName>Polygalacturonase A</fullName>
    </alternativeName>
</protein>
<gene>
    <name type="primary">pgaA</name>
    <name type="synonym">pecA</name>
</gene>